<reference key="1">
    <citation type="journal article" date="2000" name="DNA Res.">
        <title>Structural analysis of Arabidopsis thaliana chromosome 3. II. Sequence features of the 4,251,695 bp regions covered by 90 P1, TAC and BAC clones.</title>
        <authorList>
            <person name="Kaneko T."/>
            <person name="Katoh T."/>
            <person name="Sato S."/>
            <person name="Nakamura Y."/>
            <person name="Asamizu E."/>
            <person name="Tabata S."/>
        </authorList>
    </citation>
    <scope>NUCLEOTIDE SEQUENCE [LARGE SCALE GENOMIC DNA]</scope>
    <source>
        <strain>cv. Columbia</strain>
    </source>
</reference>
<reference key="2">
    <citation type="journal article" date="2017" name="Plant J.">
        <title>Araport11: a complete reannotation of the Arabidopsis thaliana reference genome.</title>
        <authorList>
            <person name="Cheng C.Y."/>
            <person name="Krishnakumar V."/>
            <person name="Chan A.P."/>
            <person name="Thibaud-Nissen F."/>
            <person name="Schobel S."/>
            <person name="Town C.D."/>
        </authorList>
    </citation>
    <scope>GENOME REANNOTATION</scope>
    <source>
        <strain>cv. Columbia</strain>
    </source>
</reference>
<reference key="3">
    <citation type="journal article" date="2003" name="Plant J.">
        <title>AtBXL1, a novel higher plant (Arabidopsis thaliana) putative beta-xylosidase gene, is involved in secondary cell wall metabolism and plant development.</title>
        <authorList>
            <person name="Goujon T."/>
            <person name="Minic Z."/>
            <person name="El Amrani A."/>
            <person name="Lerouxel O."/>
            <person name="Aletti E."/>
            <person name="Lapierre C."/>
            <person name="Joseleau J.-P."/>
            <person name="Jouanin L."/>
        </authorList>
    </citation>
    <scope>IDENTIFICATION</scope>
</reference>
<evidence type="ECO:0000250" key="1"/>
<evidence type="ECO:0000255" key="2"/>
<evidence type="ECO:0000305" key="3"/>
<proteinExistence type="evidence at transcript level"/>
<keyword id="KW-0272">Extracellular matrix</keyword>
<keyword id="KW-0325">Glycoprotein</keyword>
<keyword id="KW-0326">Glycosidase</keyword>
<keyword id="KW-0378">Hydrolase</keyword>
<keyword id="KW-1185">Reference proteome</keyword>
<keyword id="KW-0964">Secreted</keyword>
<keyword id="KW-0732">Signal</keyword>
<gene>
    <name type="primary">BXL5</name>
    <name type="ordered locus">At3g19620</name>
    <name type="ORF">MMB12.15</name>
</gene>
<sequence>MSIRRFVRLSLLIIALVSSLCESQKNFACDISAPATAKYGFCNVSLSYEARAKDLVSRLSLKEKVQQLVNKATGVPRLGVPPYEWWSEALHGVSDVGPGVHFNGTVPGATSFPATILTAASFNTSLWLKMGEVVSTEARAMHNVGLAGLTYWSPNVNVFRDPRWGRGQETPGEDPLVVSKYAVNYVKGLQDVHDAGKSRRLKVSSCCKHYTAYDLDNWKGIDRFHFDAKVTKQDLEDTYQTPFKSCVEEGDVSSVMCSYNRVNGIPTCADPNLLRGVIRGQWRLDGYIVSDCDSIQVYFNDIHYTKTREDAVALALKAGLNMNCGDFLGKYTENAVKLKKLNGSDVDEALIYNYIVLMRLGFFDGDPKSLPFGNLGPSDVCSKDHQMLALEAAKQGIVLLENRGDLPLPKTTVKKLAVIGPNANATKVMISNYAGVPCKYTSPIQGLQKYVPEKIVYEPGCKDVKCGDQTLISAAVKAVSEADVTVLVVGLDQTVEAEGLDRVNLTLPGYQEKLVRDVANAAKKTVVLVIMSAGPIDISFAKNLSTIRAVLWVGYPGEAGGDAIAQVIFGDYNPSGRLPETWYPQEFADKVAMTDMNMRPNSTSGFPGRSYRFYTGKPIYKFGYGLSYSSFSTFVLSAPSIIHIKTNPIMNLNKTTSVDISTVNCHDLKIRIVIGVKNHGLRSGSHVVLVFWKPPKCSKSLVGGGVPLTQLVGFERVEVGRSMTEKFTVDFDVCKALSLVDTHGKRKLVTGHHKLVIGSNSDQQIYHHLNVRLAGDSTVAI</sequence>
<accession>Q9LJN4</accession>
<feature type="signal peptide" evidence="2">
    <location>
        <begin position="1"/>
        <end position="23"/>
    </location>
</feature>
<feature type="chain" id="PRO_0000384060" description="Probable beta-D-xylosidase 5">
    <location>
        <begin position="24"/>
        <end position="781"/>
    </location>
</feature>
<feature type="active site" evidence="1">
    <location>
        <position position="291"/>
    </location>
</feature>
<feature type="glycosylation site" description="N-linked (GlcNAc...) asparagine" evidence="2">
    <location>
        <position position="43"/>
    </location>
</feature>
<feature type="glycosylation site" description="N-linked (GlcNAc...) asparagine" evidence="2">
    <location>
        <position position="103"/>
    </location>
</feature>
<feature type="glycosylation site" description="N-linked (GlcNAc...) asparagine" evidence="2">
    <location>
        <position position="123"/>
    </location>
</feature>
<feature type="glycosylation site" description="N-linked (GlcNAc...) asparagine" evidence="2">
    <location>
        <position position="342"/>
    </location>
</feature>
<feature type="glycosylation site" description="N-linked (GlcNAc...) asparagine" evidence="2">
    <location>
        <position position="424"/>
    </location>
</feature>
<feature type="glycosylation site" description="N-linked (GlcNAc...) asparagine" evidence="2">
    <location>
        <position position="504"/>
    </location>
</feature>
<feature type="glycosylation site" description="N-linked (GlcNAc...) asparagine" evidence="2">
    <location>
        <position position="543"/>
    </location>
</feature>
<feature type="glycosylation site" description="N-linked (GlcNAc...) asparagine" evidence="2">
    <location>
        <position position="601"/>
    </location>
</feature>
<feature type="glycosylation site" description="N-linked (GlcNAc...) asparagine" evidence="2">
    <location>
        <position position="653"/>
    </location>
</feature>
<comment type="subcellular location">
    <subcellularLocation>
        <location evidence="1">Secreted</location>
        <location evidence="1">Extracellular space</location>
        <location evidence="1">Extracellular matrix</location>
    </subcellularLocation>
</comment>
<comment type="similarity">
    <text evidence="3">Belongs to the glycosyl hydrolase 3 family.</text>
</comment>
<comment type="sequence caution" evidence="3">
    <conflict type="erroneous gene model prediction">
        <sequence resource="EMBL-CDS" id="BAB02547"/>
    </conflict>
</comment>
<dbReference type="EC" id="3.2.1.-"/>
<dbReference type="EMBL" id="AP000417">
    <property type="protein sequence ID" value="BAB02547.1"/>
    <property type="status" value="ALT_SEQ"/>
    <property type="molecule type" value="Genomic_DNA"/>
</dbReference>
<dbReference type="EMBL" id="CP002686">
    <property type="protein sequence ID" value="AEE76268.1"/>
    <property type="molecule type" value="Genomic_DNA"/>
</dbReference>
<dbReference type="PIR" id="T52390">
    <property type="entry name" value="T52390"/>
</dbReference>
<dbReference type="RefSeq" id="NP_188596.1">
    <property type="nucleotide sequence ID" value="NM_112852.2"/>
</dbReference>
<dbReference type="SMR" id="Q9LJN4"/>
<dbReference type="FunCoup" id="Q9LJN4">
    <property type="interactions" value="148"/>
</dbReference>
<dbReference type="STRING" id="3702.Q9LJN4"/>
<dbReference type="CAZy" id="GH3">
    <property type="family name" value="Glycoside Hydrolase Family 3"/>
</dbReference>
<dbReference type="GlyCosmos" id="Q9LJN4">
    <property type="glycosylation" value="9 sites, No reported glycans"/>
</dbReference>
<dbReference type="GlyGen" id="Q9LJN4">
    <property type="glycosylation" value="9 sites"/>
</dbReference>
<dbReference type="PaxDb" id="3702-AT3G19620.1"/>
<dbReference type="ProteomicsDB" id="240367"/>
<dbReference type="EnsemblPlants" id="AT3G19620.1">
    <property type="protein sequence ID" value="AT3G19620.1"/>
    <property type="gene ID" value="AT3G19620"/>
</dbReference>
<dbReference type="GeneID" id="821499"/>
<dbReference type="Gramene" id="AT3G19620.1">
    <property type="protein sequence ID" value="AT3G19620.1"/>
    <property type="gene ID" value="AT3G19620"/>
</dbReference>
<dbReference type="KEGG" id="ath:AT3G19620"/>
<dbReference type="Araport" id="AT3G19620"/>
<dbReference type="TAIR" id="AT3G19620"/>
<dbReference type="eggNOG" id="ENOG502QQ55">
    <property type="taxonomic scope" value="Eukaryota"/>
</dbReference>
<dbReference type="HOGENOM" id="CLU_004542_5_3_1"/>
<dbReference type="InParanoid" id="Q9LJN4"/>
<dbReference type="OMA" id="GLPNYQV"/>
<dbReference type="PhylomeDB" id="Q9LJN4"/>
<dbReference type="BioCyc" id="ARA:AT3G19620-MONOMER"/>
<dbReference type="PRO" id="PR:Q9LJN4"/>
<dbReference type="Proteomes" id="UP000006548">
    <property type="component" value="Chromosome 3"/>
</dbReference>
<dbReference type="ExpressionAtlas" id="Q9LJN4">
    <property type="expression patterns" value="baseline and differential"/>
</dbReference>
<dbReference type="GO" id="GO:0005576">
    <property type="term" value="C:extracellular region"/>
    <property type="evidence" value="ECO:0007669"/>
    <property type="project" value="UniProtKB-KW"/>
</dbReference>
<dbReference type="GO" id="GO:0009044">
    <property type="term" value="F:xylan 1,4-beta-xylosidase activity"/>
    <property type="evidence" value="ECO:0007669"/>
    <property type="project" value="InterPro"/>
</dbReference>
<dbReference type="GO" id="GO:0045493">
    <property type="term" value="P:xylan catabolic process"/>
    <property type="evidence" value="ECO:0007669"/>
    <property type="project" value="InterPro"/>
</dbReference>
<dbReference type="FunFam" id="3.40.50.1700:FF:000001">
    <property type="entry name" value="probable beta-D-xylosidase 2"/>
    <property type="match status" value="1"/>
</dbReference>
<dbReference type="FunFam" id="2.60.40.10:FF:003008">
    <property type="entry name" value="Probable beta-D-xylosidase 5"/>
    <property type="match status" value="1"/>
</dbReference>
<dbReference type="FunFam" id="3.20.20.300:FF:000004">
    <property type="entry name" value="probable beta-D-xylosidase 7"/>
    <property type="match status" value="1"/>
</dbReference>
<dbReference type="Gene3D" id="3.40.50.1700">
    <property type="entry name" value="Glycoside hydrolase family 3 C-terminal domain"/>
    <property type="match status" value="1"/>
</dbReference>
<dbReference type="Gene3D" id="3.20.20.300">
    <property type="entry name" value="Glycoside hydrolase, family 3, N-terminal domain"/>
    <property type="match status" value="1"/>
</dbReference>
<dbReference type="Gene3D" id="2.60.40.10">
    <property type="entry name" value="Immunoglobulins"/>
    <property type="match status" value="1"/>
</dbReference>
<dbReference type="InterPro" id="IPR044993">
    <property type="entry name" value="BXL"/>
</dbReference>
<dbReference type="InterPro" id="IPR026891">
    <property type="entry name" value="Fn3-like"/>
</dbReference>
<dbReference type="InterPro" id="IPR002772">
    <property type="entry name" value="Glyco_hydro_3_C"/>
</dbReference>
<dbReference type="InterPro" id="IPR036881">
    <property type="entry name" value="Glyco_hydro_3_C_sf"/>
</dbReference>
<dbReference type="InterPro" id="IPR001764">
    <property type="entry name" value="Glyco_hydro_3_N"/>
</dbReference>
<dbReference type="InterPro" id="IPR036962">
    <property type="entry name" value="Glyco_hydro_3_N_sf"/>
</dbReference>
<dbReference type="InterPro" id="IPR017853">
    <property type="entry name" value="Glycoside_hydrolase_SF"/>
</dbReference>
<dbReference type="InterPro" id="IPR013783">
    <property type="entry name" value="Ig-like_fold"/>
</dbReference>
<dbReference type="PANTHER" id="PTHR42721:SF3">
    <property type="entry name" value="BETA-D-XYLOSIDASE 5-RELATED"/>
    <property type="match status" value="1"/>
</dbReference>
<dbReference type="PANTHER" id="PTHR42721">
    <property type="entry name" value="SUGAR HYDROLASE-RELATED"/>
    <property type="match status" value="1"/>
</dbReference>
<dbReference type="Pfam" id="PF14310">
    <property type="entry name" value="Fn3-like"/>
    <property type="match status" value="1"/>
</dbReference>
<dbReference type="Pfam" id="PF00933">
    <property type="entry name" value="Glyco_hydro_3"/>
    <property type="match status" value="1"/>
</dbReference>
<dbReference type="Pfam" id="PF01915">
    <property type="entry name" value="Glyco_hydro_3_C"/>
    <property type="match status" value="1"/>
</dbReference>
<dbReference type="PRINTS" id="PR00133">
    <property type="entry name" value="GLHYDRLASE3"/>
</dbReference>
<dbReference type="SMART" id="SM01217">
    <property type="entry name" value="Fn3_like"/>
    <property type="match status" value="1"/>
</dbReference>
<dbReference type="SUPFAM" id="SSF51445">
    <property type="entry name" value="(Trans)glycosidases"/>
    <property type="match status" value="1"/>
</dbReference>
<dbReference type="SUPFAM" id="SSF52279">
    <property type="entry name" value="Beta-D-glucan exohydrolase, C-terminal domain"/>
    <property type="match status" value="1"/>
</dbReference>
<protein>
    <recommendedName>
        <fullName>Probable beta-D-xylosidase 5</fullName>
        <shortName>AtBXL5</shortName>
        <ecNumber>3.2.1.-</ecNumber>
    </recommendedName>
</protein>
<name>BXL5_ARATH</name>
<organism>
    <name type="scientific">Arabidopsis thaliana</name>
    <name type="common">Mouse-ear cress</name>
    <dbReference type="NCBI Taxonomy" id="3702"/>
    <lineage>
        <taxon>Eukaryota</taxon>
        <taxon>Viridiplantae</taxon>
        <taxon>Streptophyta</taxon>
        <taxon>Embryophyta</taxon>
        <taxon>Tracheophyta</taxon>
        <taxon>Spermatophyta</taxon>
        <taxon>Magnoliopsida</taxon>
        <taxon>eudicotyledons</taxon>
        <taxon>Gunneridae</taxon>
        <taxon>Pentapetalae</taxon>
        <taxon>rosids</taxon>
        <taxon>malvids</taxon>
        <taxon>Brassicales</taxon>
        <taxon>Brassicaceae</taxon>
        <taxon>Camelineae</taxon>
        <taxon>Arabidopsis</taxon>
    </lineage>
</organism>